<comment type="function">
    <text evidence="2">Endoplasmic reticulum palmitoyl acyltransferase that probably catalyzes the addition of palmitate onto various protein substrates and is involved in a variety of cellular processes (By similarity). Could also function as a stearoyltransferase (By similarity).</text>
</comment>
<comment type="catalytic activity">
    <reaction evidence="2">
        <text>L-cysteinyl-[protein] + hexadecanoyl-CoA = S-hexadecanoyl-L-cysteinyl-[protein] + CoA</text>
        <dbReference type="Rhea" id="RHEA:36683"/>
        <dbReference type="Rhea" id="RHEA-COMP:10131"/>
        <dbReference type="Rhea" id="RHEA-COMP:11032"/>
        <dbReference type="ChEBI" id="CHEBI:29950"/>
        <dbReference type="ChEBI" id="CHEBI:57287"/>
        <dbReference type="ChEBI" id="CHEBI:57379"/>
        <dbReference type="ChEBI" id="CHEBI:74151"/>
        <dbReference type="EC" id="2.3.1.225"/>
    </reaction>
    <physiologicalReaction direction="left-to-right" evidence="2">
        <dbReference type="Rhea" id="RHEA:36684"/>
    </physiologicalReaction>
</comment>
<comment type="catalytic activity">
    <reaction evidence="2">
        <text>L-cysteinyl-[protein] + octadecanoyl-CoA = S-octadecanoyl-L-cysteinyl-[protein] + CoA</text>
        <dbReference type="Rhea" id="RHEA:59740"/>
        <dbReference type="Rhea" id="RHEA-COMP:10131"/>
        <dbReference type="Rhea" id="RHEA-COMP:15434"/>
        <dbReference type="ChEBI" id="CHEBI:29950"/>
        <dbReference type="ChEBI" id="CHEBI:57287"/>
        <dbReference type="ChEBI" id="CHEBI:57394"/>
        <dbReference type="ChEBI" id="CHEBI:143200"/>
    </reaction>
    <physiologicalReaction direction="left-to-right" evidence="2">
        <dbReference type="Rhea" id="RHEA:59741"/>
    </physiologicalReaction>
</comment>
<comment type="subcellular location">
    <subcellularLocation>
        <location evidence="2">Endoplasmic reticulum membrane</location>
        <topology evidence="3">Multi-pass membrane protein</topology>
    </subcellularLocation>
</comment>
<comment type="developmental stage">
    <text evidence="6 7">Probably maternally supplied, the zygotic expression becomes significant at 6 hpf and increases from 7.5 hpf to 24 hpf.</text>
</comment>
<comment type="domain">
    <text evidence="1">The DHHC domain is required for palmitoyltransferase activity.</text>
</comment>
<comment type="domain">
    <text evidence="2">The C-terminal di-lysine motif confers endoplasmic reticulum localization.</text>
</comment>
<comment type="similarity">
    <text evidence="10">Belongs to the DHHC palmitoyltransferase family.</text>
</comment>
<accession>E7F6D7</accession>
<keyword id="KW-0012">Acyltransferase</keyword>
<keyword id="KW-0256">Endoplasmic reticulum</keyword>
<keyword id="KW-0449">Lipoprotein</keyword>
<keyword id="KW-0472">Membrane</keyword>
<keyword id="KW-0564">Palmitate</keyword>
<keyword id="KW-1185">Reference proteome</keyword>
<keyword id="KW-0728">SH3 domain</keyword>
<keyword id="KW-0808">Transferase</keyword>
<keyword id="KW-0812">Transmembrane</keyword>
<keyword id="KW-1133">Transmembrane helix</keyword>
<dbReference type="EC" id="2.3.1.225" evidence="2"/>
<dbReference type="EC" id="2.3.1.-" evidence="2"/>
<dbReference type="EMBL" id="CU459185">
    <property type="status" value="NOT_ANNOTATED_CDS"/>
    <property type="molecule type" value="Genomic_DNA"/>
</dbReference>
<dbReference type="RefSeq" id="NP_001191086.1">
    <property type="nucleotide sequence ID" value="NM_001204157.1"/>
</dbReference>
<dbReference type="RefSeq" id="XP_005156380.1">
    <property type="nucleotide sequence ID" value="XM_005156323.5"/>
</dbReference>
<dbReference type="FunCoup" id="E7F6D7">
    <property type="interactions" value="2052"/>
</dbReference>
<dbReference type="STRING" id="7955.ENSDARP00000127320"/>
<dbReference type="PaxDb" id="7955-ENSDARP00000127320"/>
<dbReference type="Ensembl" id="ENSDART00000153179">
    <property type="protein sequence ID" value="ENSDARP00000127320"/>
    <property type="gene ID" value="ENSDARG00000075721"/>
</dbReference>
<dbReference type="GeneID" id="324468"/>
<dbReference type="KEGG" id="dre:324468"/>
<dbReference type="AGR" id="ZFIN:ZDB-GENE-030131-3189"/>
<dbReference type="CTD" id="64429"/>
<dbReference type="ZFIN" id="ZDB-GENE-030131-3189">
    <property type="gene designation" value="zdhhc6"/>
</dbReference>
<dbReference type="eggNOG" id="KOG1314">
    <property type="taxonomic scope" value="Eukaryota"/>
</dbReference>
<dbReference type="HOGENOM" id="CLU_044394_1_0_1"/>
<dbReference type="InParanoid" id="E7F6D7"/>
<dbReference type="OMA" id="GCIHAAI"/>
<dbReference type="OrthoDB" id="331948at2759"/>
<dbReference type="PhylomeDB" id="E7F6D7"/>
<dbReference type="TreeFam" id="TF320809"/>
<dbReference type="PRO" id="PR:E7F6D7"/>
<dbReference type="Proteomes" id="UP000000437">
    <property type="component" value="Chromosome 12"/>
</dbReference>
<dbReference type="Bgee" id="ENSDARG00000075721">
    <property type="expression patterns" value="Expressed in intestine and 27 other cell types or tissues"/>
</dbReference>
<dbReference type="GO" id="GO:0005783">
    <property type="term" value="C:endoplasmic reticulum"/>
    <property type="evidence" value="ECO:0000318"/>
    <property type="project" value="GO_Central"/>
</dbReference>
<dbReference type="GO" id="GO:0005789">
    <property type="term" value="C:endoplasmic reticulum membrane"/>
    <property type="evidence" value="ECO:0007669"/>
    <property type="project" value="UniProtKB-SubCell"/>
</dbReference>
<dbReference type="GO" id="GO:0005794">
    <property type="term" value="C:Golgi apparatus"/>
    <property type="evidence" value="ECO:0000318"/>
    <property type="project" value="GO_Central"/>
</dbReference>
<dbReference type="GO" id="GO:0019706">
    <property type="term" value="F:protein-cysteine S-palmitoyltransferase activity"/>
    <property type="evidence" value="ECO:0000318"/>
    <property type="project" value="GO_Central"/>
</dbReference>
<dbReference type="GO" id="GO:0140439">
    <property type="term" value="F:protein-cysteine S-stearoyltransferase activity"/>
    <property type="evidence" value="ECO:0007669"/>
    <property type="project" value="RHEA"/>
</dbReference>
<dbReference type="GO" id="GO:0006612">
    <property type="term" value="P:protein targeting to membrane"/>
    <property type="evidence" value="ECO:0000318"/>
    <property type="project" value="GO_Central"/>
</dbReference>
<dbReference type="InterPro" id="IPR001594">
    <property type="entry name" value="Palmitoyltrfase_DHHC"/>
</dbReference>
<dbReference type="InterPro" id="IPR039859">
    <property type="entry name" value="PFA4/ZDH16/20/ERF2-like"/>
</dbReference>
<dbReference type="PANTHER" id="PTHR12246">
    <property type="entry name" value="PALMITOYLTRANSFERASE ZDHHC16"/>
    <property type="match status" value="1"/>
</dbReference>
<dbReference type="Pfam" id="PF01529">
    <property type="entry name" value="DHHC"/>
    <property type="match status" value="1"/>
</dbReference>
<dbReference type="PROSITE" id="PS50216">
    <property type="entry name" value="DHHC"/>
    <property type="match status" value="1"/>
</dbReference>
<dbReference type="PROSITE" id="PS50002">
    <property type="entry name" value="SH3"/>
    <property type="match status" value="1"/>
</dbReference>
<sequence>MNILSAIIVFENLHEVKRLFHWGPIIALTVIGVCSSMAILDSIIWYWPLDTTGGSINFIMLINWTVLILYNYFNAMFVGPGYIPLEWKPEKQQDIMYLQFCRLCQGYKAPRSHHCRKCNRCVMKMDHHCPWINNCCGHLNHAYFTSFLLLAPLGCIHAALIFIMTMYTQLYDRISFGWSSVKIDMSAARHIHHPIMPFSIAAFAATLFALGLALGTTIAVGMLFFIQMKVILRNRTSIEAWIEEKAKDRIQYYQTGEDFIFPYDLGSRWENFKQVFTWSGAPMGDGIEWPVHEKCDQYTLTIEQLKQKHDKRQRSVEYRVVEEYNGACCPLGKGLNTFFRTPCTEEPRIKLTKGETIFATRGTKWWMYGDKVLNEEQAKAGVRIRGWFPRRCVEKCLYDSANNSTSEEKKEQ</sequence>
<feature type="chain" id="PRO_0000451039" description="Palmitoyltransferase ZDHHC6">
    <location>
        <begin position="1"/>
        <end position="412"/>
    </location>
</feature>
<feature type="topological domain" description="Cytoplasmic" evidence="10">
    <location>
        <begin position="1"/>
        <end position="24"/>
    </location>
</feature>
<feature type="transmembrane region" description="Helical" evidence="3">
    <location>
        <begin position="25"/>
        <end position="45"/>
    </location>
</feature>
<feature type="topological domain" description="Lumenal" evidence="10">
    <location>
        <begin position="46"/>
        <end position="57"/>
    </location>
</feature>
<feature type="transmembrane region" description="Helical" evidence="3">
    <location>
        <begin position="58"/>
        <end position="78"/>
    </location>
</feature>
<feature type="topological domain" description="Cytoplasmic" evidence="10">
    <location>
        <begin position="79"/>
        <end position="143"/>
    </location>
</feature>
<feature type="transmembrane region" description="Helical" evidence="3">
    <location>
        <begin position="144"/>
        <end position="164"/>
    </location>
</feature>
<feature type="topological domain" description="Lumenal" evidence="10">
    <location>
        <begin position="165"/>
        <end position="205"/>
    </location>
</feature>
<feature type="transmembrane region" description="Helical" evidence="3">
    <location>
        <begin position="206"/>
        <end position="226"/>
    </location>
</feature>
<feature type="topological domain" description="Cytoplasmic" evidence="10">
    <location>
        <begin position="227"/>
        <end position="412"/>
    </location>
</feature>
<feature type="domain" description="DHHC" evidence="4">
    <location>
        <begin position="99"/>
        <end position="149"/>
    </location>
</feature>
<feature type="domain" description="SH3" evidence="5">
    <location>
        <begin position="313"/>
        <end position="398"/>
    </location>
</feature>
<feature type="short sequence motif" description="Di-lysine motif" evidence="2">
    <location>
        <begin position="409"/>
        <end position="412"/>
    </location>
</feature>
<feature type="active site" description="S-palmitoyl cysteine intermediate" evidence="4">
    <location>
        <position position="129"/>
    </location>
</feature>
<feature type="lipid moiety-binding region" description="S-palmitoyl cysteine" evidence="2">
    <location>
        <position position="328"/>
    </location>
</feature>
<feature type="lipid moiety-binding region" description="S-palmitoyl cysteine" evidence="2">
    <location>
        <position position="329"/>
    </location>
</feature>
<feature type="lipid moiety-binding region" description="S-palmitoyl cysteine" evidence="2">
    <location>
        <position position="343"/>
    </location>
</feature>
<organism>
    <name type="scientific">Danio rerio</name>
    <name type="common">Zebrafish</name>
    <name type="synonym">Brachydanio rerio</name>
    <dbReference type="NCBI Taxonomy" id="7955"/>
    <lineage>
        <taxon>Eukaryota</taxon>
        <taxon>Metazoa</taxon>
        <taxon>Chordata</taxon>
        <taxon>Craniata</taxon>
        <taxon>Vertebrata</taxon>
        <taxon>Euteleostomi</taxon>
        <taxon>Actinopterygii</taxon>
        <taxon>Neopterygii</taxon>
        <taxon>Teleostei</taxon>
        <taxon>Ostariophysi</taxon>
        <taxon>Cypriniformes</taxon>
        <taxon>Danionidae</taxon>
        <taxon>Danioninae</taxon>
        <taxon>Danio</taxon>
    </lineage>
</organism>
<reference key="1">
    <citation type="journal article" date="2013" name="Nature">
        <title>The zebrafish reference genome sequence and its relationship to the human genome.</title>
        <authorList>
            <person name="Howe K."/>
            <person name="Clark M.D."/>
            <person name="Torroja C.F."/>
            <person name="Torrance J."/>
            <person name="Berthelot C."/>
            <person name="Muffato M."/>
            <person name="Collins J.E."/>
            <person name="Humphray S."/>
            <person name="McLaren K."/>
            <person name="Matthews L."/>
            <person name="McLaren S."/>
            <person name="Sealy I."/>
            <person name="Caccamo M."/>
            <person name="Churcher C."/>
            <person name="Scott C."/>
            <person name="Barrett J.C."/>
            <person name="Koch R."/>
            <person name="Rauch G.J."/>
            <person name="White S."/>
            <person name="Chow W."/>
            <person name="Kilian B."/>
            <person name="Quintais L.T."/>
            <person name="Guerra-Assuncao J.A."/>
            <person name="Zhou Y."/>
            <person name="Gu Y."/>
            <person name="Yen J."/>
            <person name="Vogel J.H."/>
            <person name="Eyre T."/>
            <person name="Redmond S."/>
            <person name="Banerjee R."/>
            <person name="Chi J."/>
            <person name="Fu B."/>
            <person name="Langley E."/>
            <person name="Maguire S.F."/>
            <person name="Laird G.K."/>
            <person name="Lloyd D."/>
            <person name="Kenyon E."/>
            <person name="Donaldson S."/>
            <person name="Sehra H."/>
            <person name="Almeida-King J."/>
            <person name="Loveland J."/>
            <person name="Trevanion S."/>
            <person name="Jones M."/>
            <person name="Quail M."/>
            <person name="Willey D."/>
            <person name="Hunt A."/>
            <person name="Burton J."/>
            <person name="Sims S."/>
            <person name="McLay K."/>
            <person name="Plumb B."/>
            <person name="Davis J."/>
            <person name="Clee C."/>
            <person name="Oliver K."/>
            <person name="Clark R."/>
            <person name="Riddle C."/>
            <person name="Elliot D."/>
            <person name="Threadgold G."/>
            <person name="Harden G."/>
            <person name="Ware D."/>
            <person name="Begum S."/>
            <person name="Mortimore B."/>
            <person name="Kerry G."/>
            <person name="Heath P."/>
            <person name="Phillimore B."/>
            <person name="Tracey A."/>
            <person name="Corby N."/>
            <person name="Dunn M."/>
            <person name="Johnson C."/>
            <person name="Wood J."/>
            <person name="Clark S."/>
            <person name="Pelan S."/>
            <person name="Griffiths G."/>
            <person name="Smith M."/>
            <person name="Glithero R."/>
            <person name="Howden P."/>
            <person name="Barker N."/>
            <person name="Lloyd C."/>
            <person name="Stevens C."/>
            <person name="Harley J."/>
            <person name="Holt K."/>
            <person name="Panagiotidis G."/>
            <person name="Lovell J."/>
            <person name="Beasley H."/>
            <person name="Henderson C."/>
            <person name="Gordon D."/>
            <person name="Auger K."/>
            <person name="Wright D."/>
            <person name="Collins J."/>
            <person name="Raisen C."/>
            <person name="Dyer L."/>
            <person name="Leung K."/>
            <person name="Robertson L."/>
            <person name="Ambridge K."/>
            <person name="Leongamornlert D."/>
            <person name="McGuire S."/>
            <person name="Gilderthorp R."/>
            <person name="Griffiths C."/>
            <person name="Manthravadi D."/>
            <person name="Nichol S."/>
            <person name="Barker G."/>
            <person name="Whitehead S."/>
            <person name="Kay M."/>
            <person name="Brown J."/>
            <person name="Murnane C."/>
            <person name="Gray E."/>
            <person name="Humphries M."/>
            <person name="Sycamore N."/>
            <person name="Barker D."/>
            <person name="Saunders D."/>
            <person name="Wallis J."/>
            <person name="Babbage A."/>
            <person name="Hammond S."/>
            <person name="Mashreghi-Mohammadi M."/>
            <person name="Barr L."/>
            <person name="Martin S."/>
            <person name="Wray P."/>
            <person name="Ellington A."/>
            <person name="Matthews N."/>
            <person name="Ellwood M."/>
            <person name="Woodmansey R."/>
            <person name="Clark G."/>
            <person name="Cooper J."/>
            <person name="Tromans A."/>
            <person name="Grafham D."/>
            <person name="Skuce C."/>
            <person name="Pandian R."/>
            <person name="Andrews R."/>
            <person name="Harrison E."/>
            <person name="Kimberley A."/>
            <person name="Garnett J."/>
            <person name="Fosker N."/>
            <person name="Hall R."/>
            <person name="Garner P."/>
            <person name="Kelly D."/>
            <person name="Bird C."/>
            <person name="Palmer S."/>
            <person name="Gehring I."/>
            <person name="Berger A."/>
            <person name="Dooley C.M."/>
            <person name="Ersan-Urun Z."/>
            <person name="Eser C."/>
            <person name="Geiger H."/>
            <person name="Geisler M."/>
            <person name="Karotki L."/>
            <person name="Kirn A."/>
            <person name="Konantz J."/>
            <person name="Konantz M."/>
            <person name="Oberlander M."/>
            <person name="Rudolph-Geiger S."/>
            <person name="Teucke M."/>
            <person name="Lanz C."/>
            <person name="Raddatz G."/>
            <person name="Osoegawa K."/>
            <person name="Zhu B."/>
            <person name="Rapp A."/>
            <person name="Widaa S."/>
            <person name="Langford C."/>
            <person name="Yang F."/>
            <person name="Schuster S.C."/>
            <person name="Carter N.P."/>
            <person name="Harrow J."/>
            <person name="Ning Z."/>
            <person name="Herrero J."/>
            <person name="Searle S.M."/>
            <person name="Enright A."/>
            <person name="Geisler R."/>
            <person name="Plasterk R.H."/>
            <person name="Lee C."/>
            <person name="Westerfield M."/>
            <person name="de Jong P.J."/>
            <person name="Zon L.I."/>
            <person name="Postlethwait J.H."/>
            <person name="Nusslein-Volhard C."/>
            <person name="Hubbard T.J."/>
            <person name="Roest Crollius H."/>
            <person name="Rogers J."/>
            <person name="Stemple D.L."/>
        </authorList>
    </citation>
    <scope>NUCLEOTIDE SEQUENCE [LARGE SCALE GENOMIC DNA]</scope>
    <source>
        <strain>Tuebingen</strain>
    </source>
</reference>
<reference key="2">
    <citation type="journal article" date="2015" name="Neurotoxicol. Teratol.">
        <title>2-Bromopalmitate impairs neural stem/progenitor cell proliferation, promotes cell apoptosis and induces malformation in zebrafish embryonic brain.</title>
        <authorList>
            <person name="Wang C."/>
            <person name="Chen X."/>
            <person name="Shi W."/>
            <person name="Wang F."/>
            <person name="Du Z."/>
            <person name="Li X."/>
            <person name="Yao Y."/>
            <person name="Liu T."/>
            <person name="Shao T."/>
            <person name="Li G."/>
            <person name="Hao A."/>
        </authorList>
    </citation>
    <scope>DEVELOPMENTAL STAGE</scope>
</reference>
<reference key="3">
    <citation type="journal article" date="2016" name="Biochem. Biophys. Res. Commun.">
        <title>Protein palmitoylation activate zygotic gene expression during the maternal-to-zygotic transition.</title>
        <authorList>
            <person name="Du Z."/>
            <person name="Chen X."/>
            <person name="Li X."/>
            <person name="He K."/>
            <person name="Ji S."/>
            <person name="Shi W."/>
            <person name="Hao A."/>
        </authorList>
    </citation>
    <scope>DEVELOPMENTAL STAGE</scope>
</reference>
<gene>
    <name evidence="9 12" type="primary">zdhhc6</name>
    <name evidence="8" type="synonym">dhhc6</name>
</gene>
<protein>
    <recommendedName>
        <fullName evidence="10">Palmitoyltransferase ZDHHC6</fullName>
        <ecNumber evidence="2">2.3.1.225</ecNumber>
    </recommendedName>
    <alternativeName>
        <fullName evidence="8">DHHC domain-containing protein 6</fullName>
    </alternativeName>
    <alternativeName>
        <fullName evidence="2">Stearoyltransferase ZDHHC6</fullName>
        <ecNumber evidence="2">2.3.1.-</ecNumber>
    </alternativeName>
    <alternativeName>
        <fullName evidence="11">Zinc finger DHHC domain-containing protein 6</fullName>
    </alternativeName>
</protein>
<name>ZDHC6_DANRE</name>
<proteinExistence type="evidence at transcript level"/>
<evidence type="ECO:0000250" key="1">
    <source>
        <dbReference type="UniProtKB" id="Q8IUH5"/>
    </source>
</evidence>
<evidence type="ECO:0000250" key="2">
    <source>
        <dbReference type="UniProtKB" id="Q9H6R6"/>
    </source>
</evidence>
<evidence type="ECO:0000255" key="3"/>
<evidence type="ECO:0000255" key="4">
    <source>
        <dbReference type="PROSITE-ProRule" id="PRU00067"/>
    </source>
</evidence>
<evidence type="ECO:0000255" key="5">
    <source>
        <dbReference type="PROSITE-ProRule" id="PRU00192"/>
    </source>
</evidence>
<evidence type="ECO:0000269" key="6">
    <source>
    </source>
</evidence>
<evidence type="ECO:0000269" key="7">
    <source>
    </source>
</evidence>
<evidence type="ECO:0000303" key="8">
    <source>
    </source>
</evidence>
<evidence type="ECO:0000303" key="9">
    <source>
    </source>
</evidence>
<evidence type="ECO:0000305" key="10"/>
<evidence type="ECO:0000305" key="11">
    <source>
    </source>
</evidence>
<evidence type="ECO:0000312" key="12">
    <source>
        <dbReference type="ZFIN" id="ZDB-GENE-030131-3189"/>
    </source>
</evidence>